<feature type="chain" id="PRO_0000167807" description="ESAT-6-like protein EsxN">
    <location>
        <begin position="1"/>
        <end position="94"/>
    </location>
</feature>
<accession>P0A571</accession>
<accession>A0A1R3XZD4</accession>
<accession>O53942</accession>
<accession>X2BJ78</accession>
<protein>
    <recommendedName>
        <fullName evidence="1">ESAT-6-like protein EsxN</fullName>
    </recommendedName>
</protein>
<keyword id="KW-1185">Reference proteome</keyword>
<keyword id="KW-0964">Secreted</keyword>
<dbReference type="EMBL" id="LT708304">
    <property type="protein sequence ID" value="SIU00425.1"/>
    <property type="molecule type" value="Genomic_DNA"/>
</dbReference>
<dbReference type="RefSeq" id="NP_855474.1">
    <property type="nucleotide sequence ID" value="NC_002945.3"/>
</dbReference>
<dbReference type="RefSeq" id="WP_003408840.1">
    <property type="nucleotide sequence ID" value="NC_002945.4"/>
</dbReference>
<dbReference type="SMR" id="P0A571"/>
<dbReference type="GeneID" id="45426331"/>
<dbReference type="KEGG" id="mbo:BQ2027_MB1821"/>
<dbReference type="PATRIC" id="fig|233413.5.peg.2001"/>
<dbReference type="Proteomes" id="UP000001419">
    <property type="component" value="Chromosome"/>
</dbReference>
<dbReference type="GO" id="GO:0005576">
    <property type="term" value="C:extracellular region"/>
    <property type="evidence" value="ECO:0007669"/>
    <property type="project" value="UniProtKB-SubCell"/>
</dbReference>
<dbReference type="FunFam" id="1.10.287.1060:FF:000004">
    <property type="entry name" value="ESAT-6-like protein EsxI"/>
    <property type="match status" value="1"/>
</dbReference>
<dbReference type="Gene3D" id="1.10.287.1060">
    <property type="entry name" value="ESAT-6-like"/>
    <property type="match status" value="1"/>
</dbReference>
<dbReference type="InterPro" id="IPR009416">
    <property type="entry name" value="ESAT-6-like_Myco"/>
</dbReference>
<dbReference type="InterPro" id="IPR036689">
    <property type="entry name" value="ESAT-6-like_sf"/>
</dbReference>
<dbReference type="InterPro" id="IPR010310">
    <property type="entry name" value="T7SS_ESAT-6-like"/>
</dbReference>
<dbReference type="Pfam" id="PF06013">
    <property type="entry name" value="WXG100"/>
    <property type="match status" value="1"/>
</dbReference>
<dbReference type="PIRSF" id="PIRSF037656">
    <property type="entry name" value="DUF1066"/>
    <property type="match status" value="1"/>
</dbReference>
<dbReference type="SUPFAM" id="SSF140453">
    <property type="entry name" value="EsxAB dimer-like"/>
    <property type="match status" value="1"/>
</dbReference>
<sequence length="94" mass="9942">MTINYQFGDVDAHGAMIRAQAASLEAEHQAIVRDVLAAGDFWGGAGSVACQEFITQLGRNFQVIYEQANAHGQKVQAAGNNMAQTDSAVGSSWA</sequence>
<proteinExistence type="inferred from homology"/>
<evidence type="ECO:0000250" key="1">
    <source>
        <dbReference type="UniProtKB" id="P9WNJ3"/>
    </source>
</evidence>
<evidence type="ECO:0000305" key="2"/>
<organism>
    <name type="scientific">Mycobacterium bovis (strain ATCC BAA-935 / AF2122/97)</name>
    <dbReference type="NCBI Taxonomy" id="233413"/>
    <lineage>
        <taxon>Bacteria</taxon>
        <taxon>Bacillati</taxon>
        <taxon>Actinomycetota</taxon>
        <taxon>Actinomycetes</taxon>
        <taxon>Mycobacteriales</taxon>
        <taxon>Mycobacteriaceae</taxon>
        <taxon>Mycobacterium</taxon>
        <taxon>Mycobacterium tuberculosis complex</taxon>
    </lineage>
</organism>
<name>ESXN_MYCBO</name>
<gene>
    <name evidence="1" type="primary">esxN</name>
    <name type="ordered locus">BQ2027_MB1821</name>
    <name type="ORF">MTV049.15</name>
</gene>
<comment type="subcellular location">
    <subcellularLocation>
        <location evidence="1">Secreted</location>
    </subcellularLocation>
    <text evidence="1">Secreted via the ESX-5 / type VII secretion system (T7SS).</text>
</comment>
<comment type="similarity">
    <text evidence="2">Belongs to the WXG100 family. ESAT-6 subfamily.</text>
</comment>
<reference key="1">
    <citation type="journal article" date="2003" name="Proc. Natl. Acad. Sci. U.S.A.">
        <title>The complete genome sequence of Mycobacterium bovis.</title>
        <authorList>
            <person name="Garnier T."/>
            <person name="Eiglmeier K."/>
            <person name="Camus J.-C."/>
            <person name="Medina N."/>
            <person name="Mansoor H."/>
            <person name="Pryor M."/>
            <person name="Duthoy S."/>
            <person name="Grondin S."/>
            <person name="Lacroix C."/>
            <person name="Monsempe C."/>
            <person name="Simon S."/>
            <person name="Harris B."/>
            <person name="Atkin R."/>
            <person name="Doggett J."/>
            <person name="Mayes R."/>
            <person name="Keating L."/>
            <person name="Wheeler P.R."/>
            <person name="Parkhill J."/>
            <person name="Barrell B.G."/>
            <person name="Cole S.T."/>
            <person name="Gordon S.V."/>
            <person name="Hewinson R.G."/>
        </authorList>
    </citation>
    <scope>NUCLEOTIDE SEQUENCE [LARGE SCALE GENOMIC DNA]</scope>
    <source>
        <strain>ATCC BAA-935 / AF2122/97</strain>
    </source>
</reference>
<reference key="2">
    <citation type="journal article" date="2017" name="Genome Announc.">
        <title>Updated reference genome sequence and annotation of Mycobacterium bovis AF2122/97.</title>
        <authorList>
            <person name="Malone K.M."/>
            <person name="Farrell D."/>
            <person name="Stuber T.P."/>
            <person name="Schubert O.T."/>
            <person name="Aebersold R."/>
            <person name="Robbe-Austerman S."/>
            <person name="Gordon S.V."/>
        </authorList>
    </citation>
    <scope>NUCLEOTIDE SEQUENCE [LARGE SCALE GENOMIC DNA]</scope>
    <scope>GENOME REANNOTATION</scope>
    <source>
        <strain>ATCC BAA-935 / AF2122/97</strain>
    </source>
</reference>